<organism>
    <name type="scientific">Neisseria gonorrhoeae (strain ATCC 700825 / FA 1090)</name>
    <dbReference type="NCBI Taxonomy" id="242231"/>
    <lineage>
        <taxon>Bacteria</taxon>
        <taxon>Pseudomonadati</taxon>
        <taxon>Pseudomonadota</taxon>
        <taxon>Betaproteobacteria</taxon>
        <taxon>Neisseriales</taxon>
        <taxon>Neisseriaceae</taxon>
        <taxon>Neisseria</taxon>
    </lineage>
</organism>
<dbReference type="EMBL" id="AE004969">
    <property type="protein sequence ID" value="AAW89626.1"/>
    <property type="molecule type" value="Genomic_DNA"/>
</dbReference>
<dbReference type="RefSeq" id="WP_010951151.1">
    <property type="nucleotide sequence ID" value="NC_002946.2"/>
</dbReference>
<dbReference type="RefSeq" id="YP_208038.1">
    <property type="nucleotide sequence ID" value="NC_002946.2"/>
</dbReference>
<dbReference type="SMR" id="Q5F861"/>
<dbReference type="STRING" id="242231.NGO_0930"/>
<dbReference type="KEGG" id="ngo:NGO_0930"/>
<dbReference type="PATRIC" id="fig|242231.10.peg.1091"/>
<dbReference type="HOGENOM" id="CLU_114306_2_1_4"/>
<dbReference type="Proteomes" id="UP000000535">
    <property type="component" value="Chromosome"/>
</dbReference>
<dbReference type="GO" id="GO:1990904">
    <property type="term" value="C:ribonucleoprotein complex"/>
    <property type="evidence" value="ECO:0007669"/>
    <property type="project" value="UniProtKB-KW"/>
</dbReference>
<dbReference type="GO" id="GO:0005840">
    <property type="term" value="C:ribosome"/>
    <property type="evidence" value="ECO:0007669"/>
    <property type="project" value="UniProtKB-KW"/>
</dbReference>
<dbReference type="GO" id="GO:0003735">
    <property type="term" value="F:structural constituent of ribosome"/>
    <property type="evidence" value="ECO:0007669"/>
    <property type="project" value="InterPro"/>
</dbReference>
<dbReference type="GO" id="GO:0006412">
    <property type="term" value="P:translation"/>
    <property type="evidence" value="ECO:0007669"/>
    <property type="project" value="UniProtKB-UniRule"/>
</dbReference>
<dbReference type="Gene3D" id="4.10.830.30">
    <property type="entry name" value="Ribosomal protein L31"/>
    <property type="match status" value="1"/>
</dbReference>
<dbReference type="HAMAP" id="MF_00502">
    <property type="entry name" value="Ribosomal_bL31_2"/>
    <property type="match status" value="1"/>
</dbReference>
<dbReference type="InterPro" id="IPR034704">
    <property type="entry name" value="Ribosomal_bL28/bL31-like_sf"/>
</dbReference>
<dbReference type="InterPro" id="IPR002150">
    <property type="entry name" value="Ribosomal_bL31"/>
</dbReference>
<dbReference type="InterPro" id="IPR027493">
    <property type="entry name" value="Ribosomal_bL31_B"/>
</dbReference>
<dbReference type="InterPro" id="IPR042105">
    <property type="entry name" value="Ribosomal_bL31_sf"/>
</dbReference>
<dbReference type="NCBIfam" id="TIGR00105">
    <property type="entry name" value="L31"/>
    <property type="match status" value="1"/>
</dbReference>
<dbReference type="NCBIfam" id="NF002462">
    <property type="entry name" value="PRK01678.1"/>
    <property type="match status" value="1"/>
</dbReference>
<dbReference type="PANTHER" id="PTHR33280">
    <property type="entry name" value="50S RIBOSOMAL PROTEIN L31, CHLOROPLASTIC"/>
    <property type="match status" value="1"/>
</dbReference>
<dbReference type="PANTHER" id="PTHR33280:SF1">
    <property type="entry name" value="LARGE RIBOSOMAL SUBUNIT PROTEIN BL31C"/>
    <property type="match status" value="1"/>
</dbReference>
<dbReference type="Pfam" id="PF01197">
    <property type="entry name" value="Ribosomal_L31"/>
    <property type="match status" value="1"/>
</dbReference>
<dbReference type="PRINTS" id="PR01249">
    <property type="entry name" value="RIBOSOMALL31"/>
</dbReference>
<dbReference type="SUPFAM" id="SSF143800">
    <property type="entry name" value="L28p-like"/>
    <property type="match status" value="1"/>
</dbReference>
<dbReference type="PROSITE" id="PS01143">
    <property type="entry name" value="RIBOSOMAL_L31"/>
    <property type="match status" value="1"/>
</dbReference>
<evidence type="ECO:0000255" key="1">
    <source>
        <dbReference type="HAMAP-Rule" id="MF_00502"/>
    </source>
</evidence>
<evidence type="ECO:0000305" key="2"/>
<feature type="chain" id="PRO_0000173238" description="Large ribosomal subunit protein bL31B">
    <location>
        <begin position="1"/>
        <end position="91"/>
    </location>
</feature>
<sequence>MKPNIHPDNYRTVLFFDSSANEGWLIRSCAGTHGKTMVWTDGKEYLLFSLDTSSSSHPVYTGKQRNVNTEGRASKFNQRFQSVMSSFRKDK</sequence>
<accession>Q5F861</accession>
<comment type="subunit">
    <text evidence="1">Part of the 50S ribosomal subunit.</text>
</comment>
<comment type="similarity">
    <text evidence="1">Belongs to the bacterial ribosomal protein bL31 family. Type B subfamily.</text>
</comment>
<protein>
    <recommendedName>
        <fullName evidence="1">Large ribosomal subunit protein bL31B</fullName>
    </recommendedName>
    <alternativeName>
        <fullName evidence="2">50S ribosomal protein L31 type B</fullName>
    </alternativeName>
</protein>
<name>RL31B_NEIG1</name>
<proteinExistence type="inferred from homology"/>
<gene>
    <name evidence="1" type="primary">rpmE2</name>
    <name type="ordered locus">NGO_0930</name>
</gene>
<keyword id="KW-1185">Reference proteome</keyword>
<keyword id="KW-0687">Ribonucleoprotein</keyword>
<keyword id="KW-0689">Ribosomal protein</keyword>
<reference key="1">
    <citation type="submission" date="2003-03" db="EMBL/GenBank/DDBJ databases">
        <title>The complete genome sequence of Neisseria gonorrhoeae.</title>
        <authorList>
            <person name="Lewis L.A."/>
            <person name="Gillaspy A.F."/>
            <person name="McLaughlin R.E."/>
            <person name="Gipson M."/>
            <person name="Ducey T.F."/>
            <person name="Ownbey T."/>
            <person name="Hartman K."/>
            <person name="Nydick C."/>
            <person name="Carson M.B."/>
            <person name="Vaughn J."/>
            <person name="Thomson C."/>
            <person name="Song L."/>
            <person name="Lin S."/>
            <person name="Yuan X."/>
            <person name="Najar F."/>
            <person name="Zhan M."/>
            <person name="Ren Q."/>
            <person name="Zhu H."/>
            <person name="Qi S."/>
            <person name="Kenton S.M."/>
            <person name="Lai H."/>
            <person name="White J.D."/>
            <person name="Clifton S."/>
            <person name="Roe B.A."/>
            <person name="Dyer D.W."/>
        </authorList>
    </citation>
    <scope>NUCLEOTIDE SEQUENCE [LARGE SCALE GENOMIC DNA]</scope>
    <source>
        <strain>ATCC 700825 / FA 1090</strain>
    </source>
</reference>